<protein>
    <recommendedName>
        <fullName evidence="1">Malate dehydrogenase</fullName>
        <ecNumber evidence="1">1.1.1.37</ecNumber>
    </recommendedName>
</protein>
<comment type="function">
    <text evidence="1">Catalyzes the reversible oxidation of malate to oxaloacetate.</text>
</comment>
<comment type="catalytic activity">
    <reaction evidence="1">
        <text>(S)-malate + NAD(+) = oxaloacetate + NADH + H(+)</text>
        <dbReference type="Rhea" id="RHEA:21432"/>
        <dbReference type="ChEBI" id="CHEBI:15378"/>
        <dbReference type="ChEBI" id="CHEBI:15589"/>
        <dbReference type="ChEBI" id="CHEBI:16452"/>
        <dbReference type="ChEBI" id="CHEBI:57540"/>
        <dbReference type="ChEBI" id="CHEBI:57945"/>
        <dbReference type="EC" id="1.1.1.37"/>
    </reaction>
</comment>
<comment type="similarity">
    <text evidence="1">Belongs to the LDH/MDH superfamily. MDH type 3 family.</text>
</comment>
<keyword id="KW-0520">NAD</keyword>
<keyword id="KW-0560">Oxidoreductase</keyword>
<keyword id="KW-0816">Tricarboxylic acid cycle</keyword>
<proteinExistence type="inferred from homology"/>
<reference key="1">
    <citation type="journal article" date="2009" name="J. Bacteriol.">
        <title>Genome sequences of three Agrobacterium biovars help elucidate the evolution of multichromosome genomes in bacteria.</title>
        <authorList>
            <person name="Slater S.C."/>
            <person name="Goldman B.S."/>
            <person name="Goodner B."/>
            <person name="Setubal J.C."/>
            <person name="Farrand S.K."/>
            <person name="Nester E.W."/>
            <person name="Burr T.J."/>
            <person name="Banta L."/>
            <person name="Dickerman A.W."/>
            <person name="Paulsen I."/>
            <person name="Otten L."/>
            <person name="Suen G."/>
            <person name="Welch R."/>
            <person name="Almeida N.F."/>
            <person name="Arnold F."/>
            <person name="Burton O.T."/>
            <person name="Du Z."/>
            <person name="Ewing A."/>
            <person name="Godsy E."/>
            <person name="Heisel S."/>
            <person name="Houmiel K.L."/>
            <person name="Jhaveri J."/>
            <person name="Lu J."/>
            <person name="Miller N.M."/>
            <person name="Norton S."/>
            <person name="Chen Q."/>
            <person name="Phoolcharoen W."/>
            <person name="Ohlin V."/>
            <person name="Ondrusek D."/>
            <person name="Pride N."/>
            <person name="Stricklin S.L."/>
            <person name="Sun J."/>
            <person name="Wheeler C."/>
            <person name="Wilson L."/>
            <person name="Zhu H."/>
            <person name="Wood D.W."/>
        </authorList>
    </citation>
    <scope>NUCLEOTIDE SEQUENCE [LARGE SCALE GENOMIC DNA]</scope>
    <source>
        <strain>K84 / ATCC BAA-868</strain>
    </source>
</reference>
<dbReference type="EC" id="1.1.1.37" evidence="1"/>
<dbReference type="EMBL" id="CP000628">
    <property type="protein sequence ID" value="ACM28066.1"/>
    <property type="molecule type" value="Genomic_DNA"/>
</dbReference>
<dbReference type="RefSeq" id="WP_007690171.1">
    <property type="nucleotide sequence ID" value="NC_011985.1"/>
</dbReference>
<dbReference type="SMR" id="B9JCF5"/>
<dbReference type="STRING" id="311403.Arad_4338"/>
<dbReference type="KEGG" id="ara:Arad_4338"/>
<dbReference type="eggNOG" id="COG0039">
    <property type="taxonomic scope" value="Bacteria"/>
</dbReference>
<dbReference type="HOGENOM" id="CLU_045401_2_1_5"/>
<dbReference type="Proteomes" id="UP000001600">
    <property type="component" value="Chromosome 1"/>
</dbReference>
<dbReference type="GO" id="GO:0004459">
    <property type="term" value="F:L-lactate dehydrogenase activity"/>
    <property type="evidence" value="ECO:0007669"/>
    <property type="project" value="TreeGrafter"/>
</dbReference>
<dbReference type="GO" id="GO:0030060">
    <property type="term" value="F:L-malate dehydrogenase (NAD+) activity"/>
    <property type="evidence" value="ECO:0007669"/>
    <property type="project" value="UniProtKB-UniRule"/>
</dbReference>
<dbReference type="GO" id="GO:0006089">
    <property type="term" value="P:lactate metabolic process"/>
    <property type="evidence" value="ECO:0007669"/>
    <property type="project" value="TreeGrafter"/>
</dbReference>
<dbReference type="GO" id="GO:0006099">
    <property type="term" value="P:tricarboxylic acid cycle"/>
    <property type="evidence" value="ECO:0007669"/>
    <property type="project" value="UniProtKB-UniRule"/>
</dbReference>
<dbReference type="CDD" id="cd01339">
    <property type="entry name" value="LDH-like_MDH"/>
    <property type="match status" value="1"/>
</dbReference>
<dbReference type="FunFam" id="3.40.50.720:FF:000018">
    <property type="entry name" value="Malate dehydrogenase"/>
    <property type="match status" value="1"/>
</dbReference>
<dbReference type="FunFam" id="3.90.110.10:FF:000004">
    <property type="entry name" value="Malate dehydrogenase"/>
    <property type="match status" value="1"/>
</dbReference>
<dbReference type="Gene3D" id="3.90.110.10">
    <property type="entry name" value="Lactate dehydrogenase/glycoside hydrolase, family 4, C-terminal"/>
    <property type="match status" value="1"/>
</dbReference>
<dbReference type="Gene3D" id="3.40.50.720">
    <property type="entry name" value="NAD(P)-binding Rossmann-like Domain"/>
    <property type="match status" value="1"/>
</dbReference>
<dbReference type="HAMAP" id="MF_00487">
    <property type="entry name" value="Malate_dehydrog_3"/>
    <property type="match status" value="1"/>
</dbReference>
<dbReference type="InterPro" id="IPR001557">
    <property type="entry name" value="L-lactate/malate_DH"/>
</dbReference>
<dbReference type="InterPro" id="IPR022383">
    <property type="entry name" value="Lactate/malate_DH_C"/>
</dbReference>
<dbReference type="InterPro" id="IPR001236">
    <property type="entry name" value="Lactate/malate_DH_N"/>
</dbReference>
<dbReference type="InterPro" id="IPR015955">
    <property type="entry name" value="Lactate_DH/Glyco_Ohase_4_C"/>
</dbReference>
<dbReference type="InterPro" id="IPR011275">
    <property type="entry name" value="Malate_DH_type3"/>
</dbReference>
<dbReference type="InterPro" id="IPR036291">
    <property type="entry name" value="NAD(P)-bd_dom_sf"/>
</dbReference>
<dbReference type="NCBIfam" id="TIGR01763">
    <property type="entry name" value="MalateDH_bact"/>
    <property type="match status" value="1"/>
</dbReference>
<dbReference type="NCBIfam" id="NF004863">
    <property type="entry name" value="PRK06223.1"/>
    <property type="match status" value="1"/>
</dbReference>
<dbReference type="PANTHER" id="PTHR43128">
    <property type="entry name" value="L-2-HYDROXYCARBOXYLATE DEHYDROGENASE (NAD(P)(+))"/>
    <property type="match status" value="1"/>
</dbReference>
<dbReference type="PANTHER" id="PTHR43128:SF16">
    <property type="entry name" value="L-LACTATE DEHYDROGENASE"/>
    <property type="match status" value="1"/>
</dbReference>
<dbReference type="Pfam" id="PF02866">
    <property type="entry name" value="Ldh_1_C"/>
    <property type="match status" value="1"/>
</dbReference>
<dbReference type="Pfam" id="PF00056">
    <property type="entry name" value="Ldh_1_N"/>
    <property type="match status" value="1"/>
</dbReference>
<dbReference type="PIRSF" id="PIRSF000102">
    <property type="entry name" value="Lac_mal_DH"/>
    <property type="match status" value="1"/>
</dbReference>
<dbReference type="PRINTS" id="PR00086">
    <property type="entry name" value="LLDHDRGNASE"/>
</dbReference>
<dbReference type="SUPFAM" id="SSF56327">
    <property type="entry name" value="LDH C-terminal domain-like"/>
    <property type="match status" value="1"/>
</dbReference>
<dbReference type="SUPFAM" id="SSF51735">
    <property type="entry name" value="NAD(P)-binding Rossmann-fold domains"/>
    <property type="match status" value="1"/>
</dbReference>
<name>MDH_RHIR8</name>
<accession>B9JCF5</accession>
<gene>
    <name evidence="1" type="primary">mdh</name>
    <name type="ordered locus">Arad_4338</name>
</gene>
<organism>
    <name type="scientific">Rhizobium rhizogenes (strain K84 / ATCC BAA-868)</name>
    <name type="common">Agrobacterium radiobacter</name>
    <dbReference type="NCBI Taxonomy" id="311403"/>
    <lineage>
        <taxon>Bacteria</taxon>
        <taxon>Pseudomonadati</taxon>
        <taxon>Pseudomonadota</taxon>
        <taxon>Alphaproteobacteria</taxon>
        <taxon>Hyphomicrobiales</taxon>
        <taxon>Rhizobiaceae</taxon>
        <taxon>Rhizobium/Agrobacterium group</taxon>
        <taxon>Rhizobium</taxon>
    </lineage>
</organism>
<evidence type="ECO:0000255" key="1">
    <source>
        <dbReference type="HAMAP-Rule" id="MF_00487"/>
    </source>
</evidence>
<feature type="chain" id="PRO_1000191636" description="Malate dehydrogenase">
    <location>
        <begin position="1"/>
        <end position="320"/>
    </location>
</feature>
<feature type="active site" description="Proton acceptor" evidence="1">
    <location>
        <position position="176"/>
    </location>
</feature>
<feature type="binding site" evidence="1">
    <location>
        <begin position="10"/>
        <end position="15"/>
    </location>
    <ligand>
        <name>NAD(+)</name>
        <dbReference type="ChEBI" id="CHEBI:57540"/>
    </ligand>
</feature>
<feature type="binding site" evidence="1">
    <location>
        <position position="34"/>
    </location>
    <ligand>
        <name>NAD(+)</name>
        <dbReference type="ChEBI" id="CHEBI:57540"/>
    </ligand>
</feature>
<feature type="binding site" evidence="1">
    <location>
        <position position="83"/>
    </location>
    <ligand>
        <name>substrate</name>
    </ligand>
</feature>
<feature type="binding site" evidence="1">
    <location>
        <position position="89"/>
    </location>
    <ligand>
        <name>substrate</name>
    </ligand>
</feature>
<feature type="binding site" evidence="1">
    <location>
        <position position="96"/>
    </location>
    <ligand>
        <name>NAD(+)</name>
        <dbReference type="ChEBI" id="CHEBI:57540"/>
    </ligand>
</feature>
<feature type="binding site" evidence="1">
    <location>
        <begin position="119"/>
        <end position="121"/>
    </location>
    <ligand>
        <name>NAD(+)</name>
        <dbReference type="ChEBI" id="CHEBI:57540"/>
    </ligand>
</feature>
<feature type="binding site" evidence="1">
    <location>
        <position position="121"/>
    </location>
    <ligand>
        <name>substrate</name>
    </ligand>
</feature>
<feature type="binding site" evidence="1">
    <location>
        <position position="152"/>
    </location>
    <ligand>
        <name>substrate</name>
    </ligand>
</feature>
<sequence length="320" mass="33491">MARNKIALIGSGMIGGTLAHLAGLKELGDIVLFDIADGIPQGKGLDIAQSSPVEGFDANLTGASDYSAIEGADVCIVTAGVARKPGMSRDDLLGINLKVMEQVGAGIKKYAPNAFVICITNPLDAMVWALQKFSGLPANKVVGMAGVLDSSRFRLFLAKEFNVSVEDVTAFVLGGHGDSMVPLARYSTVAGIPLTDLVTMGWLTAERLEEIIQRTRDGGAEIVGLLKTGSAYYAPAASAIAMAESYLKDKKRVLPCAAHLDGQYGVKDMYVGVPTVIGAGGIERIIEIDLNKAEKEAFDKSVASVAGLCEACITIAPSLK</sequence>